<keyword id="KW-1185">Reference proteome</keyword>
<evidence type="ECO:0000255" key="1">
    <source>
        <dbReference type="HAMAP-Rule" id="MF_01575"/>
    </source>
</evidence>
<dbReference type="EMBL" id="AM946015">
    <property type="protein sequence ID" value="CAR43044.1"/>
    <property type="molecule type" value="Genomic_DNA"/>
</dbReference>
<dbReference type="RefSeq" id="WP_015911725.1">
    <property type="nucleotide sequence ID" value="NC_012004.1"/>
</dbReference>
<dbReference type="SMR" id="B9DV62"/>
<dbReference type="STRING" id="218495.SUB1405"/>
<dbReference type="KEGG" id="sub:SUB1405"/>
<dbReference type="eggNOG" id="COG4474">
    <property type="taxonomic scope" value="Bacteria"/>
</dbReference>
<dbReference type="HOGENOM" id="CLU_105319_0_0_9"/>
<dbReference type="OrthoDB" id="2301957at2"/>
<dbReference type="Proteomes" id="UP000000449">
    <property type="component" value="Chromosome"/>
</dbReference>
<dbReference type="Gene3D" id="3.40.50.450">
    <property type="match status" value="1"/>
</dbReference>
<dbReference type="HAMAP" id="MF_01575">
    <property type="entry name" value="UPF0398"/>
    <property type="match status" value="1"/>
</dbReference>
<dbReference type="InterPro" id="IPR010697">
    <property type="entry name" value="YspA"/>
</dbReference>
<dbReference type="NCBIfam" id="NF010181">
    <property type="entry name" value="PRK13660.1"/>
    <property type="match status" value="1"/>
</dbReference>
<dbReference type="PANTHER" id="PTHR38440:SF1">
    <property type="entry name" value="UPF0398 PROTEIN SPR0331"/>
    <property type="match status" value="1"/>
</dbReference>
<dbReference type="PANTHER" id="PTHR38440">
    <property type="entry name" value="UPF0398 PROTEIN YPSA"/>
    <property type="match status" value="1"/>
</dbReference>
<dbReference type="Pfam" id="PF06908">
    <property type="entry name" value="YpsA"/>
    <property type="match status" value="1"/>
</dbReference>
<dbReference type="PIRSF" id="PIRSF021290">
    <property type="entry name" value="DUF1273"/>
    <property type="match status" value="1"/>
</dbReference>
<dbReference type="SUPFAM" id="SSF102405">
    <property type="entry name" value="MCP/YpsA-like"/>
    <property type="match status" value="1"/>
</dbReference>
<reference key="1">
    <citation type="journal article" date="2009" name="BMC Genomics">
        <title>Evidence for niche adaptation in the genome of the bovine pathogen Streptococcus uberis.</title>
        <authorList>
            <person name="Ward P.N."/>
            <person name="Holden M.T.G."/>
            <person name="Leigh J.A."/>
            <person name="Lennard N."/>
            <person name="Bignell A."/>
            <person name="Barron A."/>
            <person name="Clark L."/>
            <person name="Quail M.A."/>
            <person name="Woodward J."/>
            <person name="Barrell B.G."/>
            <person name="Egan S.A."/>
            <person name="Field T.R."/>
            <person name="Maskell D."/>
            <person name="Kehoe M."/>
            <person name="Dowson C.G."/>
            <person name="Chanter N."/>
            <person name="Whatmore A.M."/>
            <person name="Bentley S.D."/>
            <person name="Parkhill J."/>
        </authorList>
    </citation>
    <scope>NUCLEOTIDE SEQUENCE [LARGE SCALE GENOMIC DNA]</scope>
    <source>
        <strain>ATCC BAA-854 / 0140J</strain>
    </source>
</reference>
<proteinExistence type="inferred from homology"/>
<accession>B9DV62</accession>
<name>Y1405_STRU0</name>
<feature type="chain" id="PRO_1000185588" description="UPF0398 protein SUB1405">
    <location>
        <begin position="1"/>
        <end position="175"/>
    </location>
</feature>
<sequence length="175" mass="20634">MTAILVTGYKSFELGLFSDKDPRIKVIKAAIQKDMVKMIEEGVDWFILTGNLGFEYWALEVLKDLKKAYPISVATIFAFENHGENWNESNLEKLAAFKTVDFVKYSYPQYENPSQFKSYHEFLMANTEGAYLFYDSENETNLKYLVMKMKELPQYRIHYLTFDRLNEIYEEGNDF</sequence>
<organism>
    <name type="scientific">Streptococcus uberis (strain ATCC BAA-854 / 0140J)</name>
    <dbReference type="NCBI Taxonomy" id="218495"/>
    <lineage>
        <taxon>Bacteria</taxon>
        <taxon>Bacillati</taxon>
        <taxon>Bacillota</taxon>
        <taxon>Bacilli</taxon>
        <taxon>Lactobacillales</taxon>
        <taxon>Streptococcaceae</taxon>
        <taxon>Streptococcus</taxon>
    </lineage>
</organism>
<gene>
    <name type="ordered locus">SUB1405</name>
</gene>
<protein>
    <recommendedName>
        <fullName evidence="1">UPF0398 protein SUB1405</fullName>
    </recommendedName>
</protein>
<comment type="similarity">
    <text evidence="1">Belongs to the UPF0398 family.</text>
</comment>